<sequence>MLTMDDIVREGHPALREVATEVTFPLSDEEKKLGREMLEFLINSQDEELAEKYGLRGGVGIAAPQLAVTKRFLAIHVHDEKDRLYSYVLYNPKIRSHSVQQACLSGGEGCLSVDREVPGYVVRSERVTIDAFDENGTPLKLRFKGYPAIVIQHEIDHLNGIMFYDHINKENPSYLPPDVDVFG</sequence>
<keyword id="KW-0378">Hydrolase</keyword>
<keyword id="KW-0408">Iron</keyword>
<keyword id="KW-0479">Metal-binding</keyword>
<keyword id="KW-0648">Protein biosynthesis</keyword>
<protein>
    <recommendedName>
        <fullName evidence="1">Peptide deformylase</fullName>
        <shortName evidence="1">PDF</shortName>
        <ecNumber evidence="1">3.5.1.88</ecNumber>
    </recommendedName>
    <alternativeName>
        <fullName evidence="1">Polypeptide deformylase</fullName>
    </alternativeName>
</protein>
<organism>
    <name type="scientific">Listeria monocytogenes serotype 4b (strain F2365)</name>
    <dbReference type="NCBI Taxonomy" id="265669"/>
    <lineage>
        <taxon>Bacteria</taxon>
        <taxon>Bacillati</taxon>
        <taxon>Bacillota</taxon>
        <taxon>Bacilli</taxon>
        <taxon>Bacillales</taxon>
        <taxon>Listeriaceae</taxon>
        <taxon>Listeria</taxon>
    </lineage>
</organism>
<comment type="function">
    <text evidence="1">Removes the formyl group from the N-terminal Met of newly synthesized proteins. Requires at least a dipeptide for an efficient rate of reaction. N-terminal L-methionine is a prerequisite for activity but the enzyme has broad specificity at other positions.</text>
</comment>
<comment type="catalytic activity">
    <reaction evidence="1">
        <text>N-terminal N-formyl-L-methionyl-[peptide] + H2O = N-terminal L-methionyl-[peptide] + formate</text>
        <dbReference type="Rhea" id="RHEA:24420"/>
        <dbReference type="Rhea" id="RHEA-COMP:10639"/>
        <dbReference type="Rhea" id="RHEA-COMP:10640"/>
        <dbReference type="ChEBI" id="CHEBI:15377"/>
        <dbReference type="ChEBI" id="CHEBI:15740"/>
        <dbReference type="ChEBI" id="CHEBI:49298"/>
        <dbReference type="ChEBI" id="CHEBI:64731"/>
        <dbReference type="EC" id="3.5.1.88"/>
    </reaction>
</comment>
<comment type="cofactor">
    <cofactor evidence="1">
        <name>Fe(2+)</name>
        <dbReference type="ChEBI" id="CHEBI:29033"/>
    </cofactor>
    <text evidence="1">Binds 1 Fe(2+) ion.</text>
</comment>
<comment type="similarity">
    <text evidence="1">Belongs to the polypeptide deformylase family.</text>
</comment>
<evidence type="ECO:0000255" key="1">
    <source>
        <dbReference type="HAMAP-Rule" id="MF_00163"/>
    </source>
</evidence>
<accession>Q721B5</accession>
<dbReference type="EC" id="3.5.1.88" evidence="1"/>
<dbReference type="EMBL" id="AE017262">
    <property type="protein sequence ID" value="AAT03849.1"/>
    <property type="molecule type" value="Genomic_DNA"/>
</dbReference>
<dbReference type="RefSeq" id="WP_003725563.1">
    <property type="nucleotide sequence ID" value="NC_002973.6"/>
</dbReference>
<dbReference type="SMR" id="Q721B5"/>
<dbReference type="KEGG" id="lmf:LMOf2365_1072"/>
<dbReference type="HOGENOM" id="CLU_061901_4_0_9"/>
<dbReference type="GO" id="GO:0046872">
    <property type="term" value="F:metal ion binding"/>
    <property type="evidence" value="ECO:0007669"/>
    <property type="project" value="UniProtKB-KW"/>
</dbReference>
<dbReference type="GO" id="GO:0042586">
    <property type="term" value="F:peptide deformylase activity"/>
    <property type="evidence" value="ECO:0007669"/>
    <property type="project" value="UniProtKB-UniRule"/>
</dbReference>
<dbReference type="GO" id="GO:0043686">
    <property type="term" value="P:co-translational protein modification"/>
    <property type="evidence" value="ECO:0007669"/>
    <property type="project" value="TreeGrafter"/>
</dbReference>
<dbReference type="GO" id="GO:0006412">
    <property type="term" value="P:translation"/>
    <property type="evidence" value="ECO:0007669"/>
    <property type="project" value="UniProtKB-UniRule"/>
</dbReference>
<dbReference type="CDD" id="cd00487">
    <property type="entry name" value="Pep_deformylase"/>
    <property type="match status" value="1"/>
</dbReference>
<dbReference type="FunFam" id="3.90.45.10:FF:000002">
    <property type="entry name" value="Peptide deformylase"/>
    <property type="match status" value="1"/>
</dbReference>
<dbReference type="Gene3D" id="3.90.45.10">
    <property type="entry name" value="Peptide deformylase"/>
    <property type="match status" value="1"/>
</dbReference>
<dbReference type="HAMAP" id="MF_00163">
    <property type="entry name" value="Pep_deformylase"/>
    <property type="match status" value="1"/>
</dbReference>
<dbReference type="InterPro" id="IPR023635">
    <property type="entry name" value="Peptide_deformylase"/>
</dbReference>
<dbReference type="InterPro" id="IPR036821">
    <property type="entry name" value="Peptide_deformylase_sf"/>
</dbReference>
<dbReference type="NCBIfam" id="TIGR00079">
    <property type="entry name" value="pept_deformyl"/>
    <property type="match status" value="1"/>
</dbReference>
<dbReference type="PANTHER" id="PTHR10458">
    <property type="entry name" value="PEPTIDE DEFORMYLASE"/>
    <property type="match status" value="1"/>
</dbReference>
<dbReference type="PANTHER" id="PTHR10458:SF8">
    <property type="entry name" value="PEPTIDE DEFORMYLASE 2"/>
    <property type="match status" value="1"/>
</dbReference>
<dbReference type="Pfam" id="PF01327">
    <property type="entry name" value="Pep_deformylase"/>
    <property type="match status" value="1"/>
</dbReference>
<dbReference type="PIRSF" id="PIRSF004749">
    <property type="entry name" value="Pep_def"/>
    <property type="match status" value="1"/>
</dbReference>
<dbReference type="PRINTS" id="PR01576">
    <property type="entry name" value="PDEFORMYLASE"/>
</dbReference>
<dbReference type="SUPFAM" id="SSF56420">
    <property type="entry name" value="Peptide deformylase"/>
    <property type="match status" value="1"/>
</dbReference>
<feature type="chain" id="PRO_0000082797" description="Peptide deformylase">
    <location>
        <begin position="1"/>
        <end position="183"/>
    </location>
</feature>
<feature type="active site" evidence="1">
    <location>
        <position position="154"/>
    </location>
</feature>
<feature type="binding site" evidence="1">
    <location>
        <position position="110"/>
    </location>
    <ligand>
        <name>Fe cation</name>
        <dbReference type="ChEBI" id="CHEBI:24875"/>
    </ligand>
</feature>
<feature type="binding site" evidence="1">
    <location>
        <position position="153"/>
    </location>
    <ligand>
        <name>Fe cation</name>
        <dbReference type="ChEBI" id="CHEBI:24875"/>
    </ligand>
</feature>
<feature type="binding site" evidence="1">
    <location>
        <position position="157"/>
    </location>
    <ligand>
        <name>Fe cation</name>
        <dbReference type="ChEBI" id="CHEBI:24875"/>
    </ligand>
</feature>
<proteinExistence type="inferred from homology"/>
<name>DEF_LISMF</name>
<gene>
    <name evidence="1" type="primary">def</name>
    <name type="ordered locus">LMOf2365_1072</name>
</gene>
<reference key="1">
    <citation type="journal article" date="2004" name="Nucleic Acids Res.">
        <title>Whole genome comparisons of serotype 4b and 1/2a strains of the food-borne pathogen Listeria monocytogenes reveal new insights into the core genome components of this species.</title>
        <authorList>
            <person name="Nelson K.E."/>
            <person name="Fouts D.E."/>
            <person name="Mongodin E.F."/>
            <person name="Ravel J."/>
            <person name="DeBoy R.T."/>
            <person name="Kolonay J.F."/>
            <person name="Rasko D.A."/>
            <person name="Angiuoli S.V."/>
            <person name="Gill S.R."/>
            <person name="Paulsen I.T."/>
            <person name="Peterson J.D."/>
            <person name="White O."/>
            <person name="Nelson W.C."/>
            <person name="Nierman W.C."/>
            <person name="Beanan M.J."/>
            <person name="Brinkac L.M."/>
            <person name="Daugherty S.C."/>
            <person name="Dodson R.J."/>
            <person name="Durkin A.S."/>
            <person name="Madupu R."/>
            <person name="Haft D.H."/>
            <person name="Selengut J."/>
            <person name="Van Aken S.E."/>
            <person name="Khouri H.M."/>
            <person name="Fedorova N."/>
            <person name="Forberger H.A."/>
            <person name="Tran B."/>
            <person name="Kathariou S."/>
            <person name="Wonderling L.D."/>
            <person name="Uhlich G.A."/>
            <person name="Bayles D.O."/>
            <person name="Luchansky J.B."/>
            <person name="Fraser C.M."/>
        </authorList>
    </citation>
    <scope>NUCLEOTIDE SEQUENCE [LARGE SCALE GENOMIC DNA]</scope>
    <source>
        <strain>F2365</strain>
    </source>
</reference>